<gene>
    <name type="primary">rbm24-b</name>
</gene>
<evidence type="ECO:0000250" key="1">
    <source>
        <dbReference type="UniProtKB" id="D3Z4I3"/>
    </source>
</evidence>
<evidence type="ECO:0000250" key="2">
    <source>
        <dbReference type="UniProtKB" id="Q6GQD3"/>
    </source>
</evidence>
<evidence type="ECO:0000250" key="3">
    <source>
        <dbReference type="UniProtKB" id="Q9BX46"/>
    </source>
</evidence>
<evidence type="ECO:0000255" key="4">
    <source>
        <dbReference type="PROSITE-ProRule" id="PRU00176"/>
    </source>
</evidence>
<evidence type="ECO:0000269" key="5">
    <source>
    </source>
</evidence>
<evidence type="ECO:0000305" key="6"/>
<reference key="1">
    <citation type="submission" date="2000-01" db="EMBL/GenBank/DDBJ databases">
        <title>MTG-1, an evolutionary conserved RNA binding protein involved in myogenesis.</title>
        <authorList>
            <person name="Jasper H."/>
            <person name="Rupp R.A."/>
        </authorList>
    </citation>
    <scope>NUCLEOTIDE SEQUENCE [MRNA]</scope>
    <source>
        <tissue>Embryo</tissue>
    </source>
</reference>
<reference key="2">
    <citation type="submission" date="2003-01" db="EMBL/GenBank/DDBJ databases">
        <authorList>
            <consortium name="NIH - Xenopus Gene Collection (XGC) project"/>
        </authorList>
    </citation>
    <scope>NUCLEOTIDE SEQUENCE [LARGE SCALE MRNA]</scope>
    <source>
        <tissue>Embryo</tissue>
    </source>
</reference>
<reference key="3">
    <citation type="journal article" date="2010" name="Mech. Dev.">
        <title>The RNA-binding protein Seb4/RBM24 is a direct target of MyoD and is required for myogenesis during Xenopus early development.</title>
        <authorList>
            <person name="Li H.Y."/>
            <person name="Bourdelas A."/>
            <person name="Carron C."/>
            <person name="Shi D.L."/>
        </authorList>
    </citation>
    <scope>FUNCTION</scope>
    <scope>INDUCTION</scope>
</reference>
<feature type="chain" id="PRO_0000273374" description="RNA-binding protein 24-B">
    <location>
        <begin position="1"/>
        <end position="224"/>
    </location>
</feature>
<feature type="domain" description="RRM" evidence="4">
    <location>
        <begin position="11"/>
        <end position="88"/>
    </location>
</feature>
<name>RB24B_XENLA</name>
<sequence>MHTTQKDTTYTKIFVGGLPYHTTDSSLRKYFEVFGDIEEAVVITDRQTGKSRGYGFVTMADRAAAERACKDPNPIIDGRKANVNLAYLGAKPRIMQPGFAFGVQQIHPALVQRPYGIPAHYVYPQAYVQQGLVIPHVQQTAAASTSPYIDYTSAAYAQYAAAAAAAYDQYPYAASPATTGYVTAAGYGYAVPQPLTAATPGTAAAAAAAFAQYQPQQLQADRMQ</sequence>
<keyword id="KW-0963">Cytoplasm</keyword>
<keyword id="KW-0221">Differentiation</keyword>
<keyword id="KW-0507">mRNA processing</keyword>
<keyword id="KW-0508">mRNA splicing</keyword>
<keyword id="KW-0539">Nucleus</keyword>
<keyword id="KW-1185">Reference proteome</keyword>
<keyword id="KW-0694">RNA-binding</keyword>
<keyword id="KW-0810">Translation regulation</keyword>
<dbReference type="EMBL" id="AJ271404">
    <property type="protein sequence ID" value="CAB96420.1"/>
    <property type="molecule type" value="mRNA"/>
</dbReference>
<dbReference type="EMBL" id="BC044956">
    <property type="protein sequence ID" value="AAH44956.1"/>
    <property type="molecule type" value="mRNA"/>
</dbReference>
<dbReference type="RefSeq" id="NP_001079578.1">
    <property type="nucleotide sequence ID" value="NM_001086109.1"/>
</dbReference>
<dbReference type="SMR" id="Q9I8B3"/>
<dbReference type="DNASU" id="379265"/>
<dbReference type="GeneID" id="379265"/>
<dbReference type="KEGG" id="xla:379265"/>
<dbReference type="AGR" id="Xenbase:XB-GENE-6256347"/>
<dbReference type="CTD" id="379265"/>
<dbReference type="Xenbase" id="XB-GENE-6256347">
    <property type="gene designation" value="rbm24.S"/>
</dbReference>
<dbReference type="OMA" id="FAFGMPQ"/>
<dbReference type="OrthoDB" id="4207594at2759"/>
<dbReference type="Proteomes" id="UP000186698">
    <property type="component" value="Chromosome 6S"/>
</dbReference>
<dbReference type="Bgee" id="379265">
    <property type="expression patterns" value="Expressed in muscle tissue and 19 other cell types or tissues"/>
</dbReference>
<dbReference type="GO" id="GO:0005737">
    <property type="term" value="C:cytoplasm"/>
    <property type="evidence" value="ECO:0000250"/>
    <property type="project" value="UniProtKB"/>
</dbReference>
<dbReference type="GO" id="GO:0005829">
    <property type="term" value="C:cytosol"/>
    <property type="evidence" value="ECO:0000318"/>
    <property type="project" value="GO_Central"/>
</dbReference>
<dbReference type="GO" id="GO:0005634">
    <property type="term" value="C:nucleus"/>
    <property type="evidence" value="ECO:0000318"/>
    <property type="project" value="GO_Central"/>
</dbReference>
<dbReference type="GO" id="GO:0035925">
    <property type="term" value="F:mRNA 3'-UTR AU-rich region binding"/>
    <property type="evidence" value="ECO:0000250"/>
    <property type="project" value="UniProtKB"/>
</dbReference>
<dbReference type="GO" id="GO:0003730">
    <property type="term" value="F:mRNA 3'-UTR binding"/>
    <property type="evidence" value="ECO:0000250"/>
    <property type="project" value="UniProtKB"/>
</dbReference>
<dbReference type="GO" id="GO:1990715">
    <property type="term" value="F:mRNA CDS binding"/>
    <property type="evidence" value="ECO:0000250"/>
    <property type="project" value="UniProtKB"/>
</dbReference>
<dbReference type="GO" id="GO:0097157">
    <property type="term" value="F:pre-mRNA intronic binding"/>
    <property type="evidence" value="ECO:0000250"/>
    <property type="project" value="UniProtKB"/>
</dbReference>
<dbReference type="GO" id="GO:1990825">
    <property type="term" value="F:sequence-specific mRNA binding"/>
    <property type="evidence" value="ECO:0000250"/>
    <property type="project" value="UniProtKB"/>
</dbReference>
<dbReference type="GO" id="GO:0061158">
    <property type="term" value="P:3'-UTR-mediated mRNA destabilization"/>
    <property type="evidence" value="ECO:0000250"/>
    <property type="project" value="UniProtKB"/>
</dbReference>
<dbReference type="GO" id="GO:0030154">
    <property type="term" value="P:cell differentiation"/>
    <property type="evidence" value="ECO:0007669"/>
    <property type="project" value="UniProtKB-KW"/>
</dbReference>
<dbReference type="GO" id="GO:0006974">
    <property type="term" value="P:DNA damage response"/>
    <property type="evidence" value="ECO:0000250"/>
    <property type="project" value="UniProtKB"/>
</dbReference>
<dbReference type="GO" id="GO:0061157">
    <property type="term" value="P:mRNA destabilization"/>
    <property type="evidence" value="ECO:0000250"/>
    <property type="project" value="UniProtKB"/>
</dbReference>
<dbReference type="GO" id="GO:0006397">
    <property type="term" value="P:mRNA processing"/>
    <property type="evidence" value="ECO:0007669"/>
    <property type="project" value="UniProtKB-KW"/>
</dbReference>
<dbReference type="GO" id="GO:0048255">
    <property type="term" value="P:mRNA stabilization"/>
    <property type="evidence" value="ECO:0000250"/>
    <property type="project" value="UniProtKB"/>
</dbReference>
<dbReference type="GO" id="GO:2000766">
    <property type="term" value="P:negative regulation of cytoplasmic translation"/>
    <property type="evidence" value="ECO:0000250"/>
    <property type="project" value="UniProtKB"/>
</dbReference>
<dbReference type="GO" id="GO:1905870">
    <property type="term" value="P:positive regulation of 3'-UTR-mediated mRNA stabilization"/>
    <property type="evidence" value="ECO:0000250"/>
    <property type="project" value="UniProtKB"/>
</dbReference>
<dbReference type="GO" id="GO:0045663">
    <property type="term" value="P:positive regulation of myoblast differentiation"/>
    <property type="evidence" value="ECO:0000250"/>
    <property type="project" value="UniProtKB"/>
</dbReference>
<dbReference type="GO" id="GO:0010831">
    <property type="term" value="P:positive regulation of myotube differentiation"/>
    <property type="evidence" value="ECO:0000250"/>
    <property type="project" value="UniProtKB"/>
</dbReference>
<dbReference type="GO" id="GO:1902811">
    <property type="term" value="P:positive regulation of skeletal muscle fiber differentiation"/>
    <property type="evidence" value="ECO:0000250"/>
    <property type="project" value="UniProtKB"/>
</dbReference>
<dbReference type="GO" id="GO:2000738">
    <property type="term" value="P:positive regulation of stem cell differentiation"/>
    <property type="evidence" value="ECO:0000250"/>
    <property type="project" value="UniProtKB"/>
</dbReference>
<dbReference type="GO" id="GO:0000381">
    <property type="term" value="P:regulation of alternative mRNA splicing, via spliceosome"/>
    <property type="evidence" value="ECO:0000250"/>
    <property type="project" value="UniProtKB"/>
</dbReference>
<dbReference type="GO" id="GO:0043488">
    <property type="term" value="P:regulation of mRNA stability"/>
    <property type="evidence" value="ECO:0000250"/>
    <property type="project" value="UniProtKB"/>
</dbReference>
<dbReference type="GO" id="GO:0010830">
    <property type="term" value="P:regulation of myotube differentiation"/>
    <property type="evidence" value="ECO:0000250"/>
    <property type="project" value="UniProtKB"/>
</dbReference>
<dbReference type="GO" id="GO:0008380">
    <property type="term" value="P:RNA splicing"/>
    <property type="evidence" value="ECO:0007669"/>
    <property type="project" value="UniProtKB-KW"/>
</dbReference>
<dbReference type="CDD" id="cd12384">
    <property type="entry name" value="RRM_RBM24_RBM38_like"/>
    <property type="match status" value="1"/>
</dbReference>
<dbReference type="FunFam" id="3.30.70.330:FF:000077">
    <property type="entry name" value="RNA-binding motif protein 24"/>
    <property type="match status" value="1"/>
</dbReference>
<dbReference type="Gene3D" id="3.30.70.330">
    <property type="match status" value="1"/>
</dbReference>
<dbReference type="InterPro" id="IPR012677">
    <property type="entry name" value="Nucleotide-bd_a/b_plait_sf"/>
</dbReference>
<dbReference type="InterPro" id="IPR035979">
    <property type="entry name" value="RBD_domain_sf"/>
</dbReference>
<dbReference type="InterPro" id="IPR050886">
    <property type="entry name" value="RNA-binding_reg"/>
</dbReference>
<dbReference type="InterPro" id="IPR000504">
    <property type="entry name" value="RRM_dom"/>
</dbReference>
<dbReference type="PANTHER" id="PTHR48024">
    <property type="entry name" value="GEO13361P1-RELATED"/>
    <property type="match status" value="1"/>
</dbReference>
<dbReference type="PANTHER" id="PTHR48024:SF10">
    <property type="entry name" value="RNA-BINDING PROTEIN 24"/>
    <property type="match status" value="1"/>
</dbReference>
<dbReference type="Pfam" id="PF00076">
    <property type="entry name" value="RRM_1"/>
    <property type="match status" value="1"/>
</dbReference>
<dbReference type="SMART" id="SM00360">
    <property type="entry name" value="RRM"/>
    <property type="match status" value="1"/>
</dbReference>
<dbReference type="SUPFAM" id="SSF54928">
    <property type="entry name" value="RNA-binding domain, RBD"/>
    <property type="match status" value="1"/>
</dbReference>
<dbReference type="PROSITE" id="PS50102">
    <property type="entry name" value="RRM"/>
    <property type="match status" value="1"/>
</dbReference>
<comment type="function">
    <text evidence="1 3 5">Multifunctional RNA-binding protein involved in the regulation of pre-mRNA splicing, mRNA stability and mRNA translation important for cell fate decision and differentiation. Plays a major role in pre-mRNA alternative splicing regulation. Mediates preferentially muscle-specific exon inclusion in numerous mRNAs important for striated cardiac and skeletal muscle cell differentiation. Binds to intronic splicing enhancer (ISE) composed of stretches of GU-rich motifs localized in flanking intron of exon that will be included by alternative splicing. Involved in embryonic stem cell (ESC) transition to cardiac cell differentiation by promoting pre-mRNA alternative splicing events of several pluripotency and/or differentiation genes. Plays a role in the regulation of mRNA stability and mRNA translation to which it is bound (By similarity). Involved in myogenic differentiation by regulating myog levels (PubMed:20338237). Binds to a huge amount of mRNAs. Required for embryonic heart development, sarcomer and M-band formation in striated muscles (By similarity).</text>
</comment>
<comment type="subcellular location">
    <subcellularLocation>
        <location evidence="2">Nucleus</location>
    </subcellularLocation>
    <subcellularLocation>
        <location evidence="1">Cytoplasm</location>
    </subcellularLocation>
</comment>
<comment type="induction">
    <text evidence="5">Up-regulated by the myogenic factor myoD during gastrulation.</text>
</comment>
<comment type="domain">
    <text evidence="3">The RRM domain is necessary for mRNA stability and mRNA translation regulation.</text>
</comment>
<accession>Q9I8B3</accession>
<organism>
    <name type="scientific">Xenopus laevis</name>
    <name type="common">African clawed frog</name>
    <dbReference type="NCBI Taxonomy" id="8355"/>
    <lineage>
        <taxon>Eukaryota</taxon>
        <taxon>Metazoa</taxon>
        <taxon>Chordata</taxon>
        <taxon>Craniata</taxon>
        <taxon>Vertebrata</taxon>
        <taxon>Euteleostomi</taxon>
        <taxon>Amphibia</taxon>
        <taxon>Batrachia</taxon>
        <taxon>Anura</taxon>
        <taxon>Pipoidea</taxon>
        <taxon>Pipidae</taxon>
        <taxon>Xenopodinae</taxon>
        <taxon>Xenopus</taxon>
        <taxon>Xenopus</taxon>
    </lineage>
</organism>
<proteinExistence type="evidence at transcript level"/>
<protein>
    <recommendedName>
        <fullName evidence="6">RNA-binding protein 24-B</fullName>
    </recommendedName>
    <alternativeName>
        <fullName>MTR-1a</fullName>
    </alternativeName>
    <alternativeName>
        <fullName>RNA-binding motif protein 24-B</fullName>
    </alternativeName>
</protein>